<dbReference type="EC" id="2.7.1.130" evidence="1"/>
<dbReference type="EMBL" id="CP000251">
    <property type="protein sequence ID" value="ABC82383.1"/>
    <property type="molecule type" value="Genomic_DNA"/>
</dbReference>
<dbReference type="RefSeq" id="WP_011421665.1">
    <property type="nucleotide sequence ID" value="NC_007760.1"/>
</dbReference>
<dbReference type="SMR" id="Q2IL55"/>
<dbReference type="STRING" id="290397.Adeh_2613"/>
<dbReference type="KEGG" id="ade:Adeh_2613"/>
<dbReference type="eggNOG" id="COG1663">
    <property type="taxonomic scope" value="Bacteria"/>
</dbReference>
<dbReference type="HOGENOM" id="CLU_038816_6_0_7"/>
<dbReference type="OrthoDB" id="9766423at2"/>
<dbReference type="UniPathway" id="UPA00359">
    <property type="reaction ID" value="UER00482"/>
</dbReference>
<dbReference type="Proteomes" id="UP000001935">
    <property type="component" value="Chromosome"/>
</dbReference>
<dbReference type="GO" id="GO:0005886">
    <property type="term" value="C:plasma membrane"/>
    <property type="evidence" value="ECO:0007669"/>
    <property type="project" value="TreeGrafter"/>
</dbReference>
<dbReference type="GO" id="GO:0005524">
    <property type="term" value="F:ATP binding"/>
    <property type="evidence" value="ECO:0007669"/>
    <property type="project" value="UniProtKB-UniRule"/>
</dbReference>
<dbReference type="GO" id="GO:0009029">
    <property type="term" value="F:tetraacyldisaccharide 4'-kinase activity"/>
    <property type="evidence" value="ECO:0007669"/>
    <property type="project" value="UniProtKB-UniRule"/>
</dbReference>
<dbReference type="GO" id="GO:0009245">
    <property type="term" value="P:lipid A biosynthetic process"/>
    <property type="evidence" value="ECO:0007669"/>
    <property type="project" value="UniProtKB-UniRule"/>
</dbReference>
<dbReference type="GO" id="GO:0009244">
    <property type="term" value="P:lipopolysaccharide core region biosynthetic process"/>
    <property type="evidence" value="ECO:0007669"/>
    <property type="project" value="TreeGrafter"/>
</dbReference>
<dbReference type="Gene3D" id="3.40.50.300">
    <property type="entry name" value="P-loop containing nucleotide triphosphate hydrolases"/>
    <property type="match status" value="1"/>
</dbReference>
<dbReference type="HAMAP" id="MF_00409">
    <property type="entry name" value="LpxK"/>
    <property type="match status" value="1"/>
</dbReference>
<dbReference type="InterPro" id="IPR003758">
    <property type="entry name" value="LpxK"/>
</dbReference>
<dbReference type="InterPro" id="IPR027417">
    <property type="entry name" value="P-loop_NTPase"/>
</dbReference>
<dbReference type="NCBIfam" id="TIGR00682">
    <property type="entry name" value="lpxK"/>
    <property type="match status" value="1"/>
</dbReference>
<dbReference type="PANTHER" id="PTHR42724">
    <property type="entry name" value="TETRAACYLDISACCHARIDE 4'-KINASE"/>
    <property type="match status" value="1"/>
</dbReference>
<dbReference type="PANTHER" id="PTHR42724:SF1">
    <property type="entry name" value="TETRAACYLDISACCHARIDE 4'-KINASE, MITOCHONDRIAL-RELATED"/>
    <property type="match status" value="1"/>
</dbReference>
<dbReference type="Pfam" id="PF02606">
    <property type="entry name" value="LpxK"/>
    <property type="match status" value="1"/>
</dbReference>
<dbReference type="SUPFAM" id="SSF52540">
    <property type="entry name" value="P-loop containing nucleoside triphosphate hydrolases"/>
    <property type="match status" value="1"/>
</dbReference>
<sequence length="378" mass="38676">MSGLEAIWWRERPGPLGALAGAPLLLAEAPFRAAAALRGALYDRGLLPAARAGAPVVSIGNLAVGGAGKTPAALAVAARLAGRGRRVAILSRGYGAARADARVASDGAGALLPAAEAGDEPALLARRLPGVAVLCGPRRAELARTAVESLGADALVLDDGFQHRALARDLDVVVLDASNPFGNGHLLPRGPNREPPSALRRAGLVWLSHADRAAPERLEALRALARDATGRAPVESRHAPTALLDGALREAGALEALRGRRVAALSGLARPAGFLRTLEALGAEVALARAFPDHHRFTAGELDAVLREAAASGCAWVVTTEKDAVRLDPALAAAAGDRLRVVRVDAELLRGADVLEAALAAALAAAPQPRPAPRAPVA</sequence>
<proteinExistence type="inferred from homology"/>
<keyword id="KW-0067">ATP-binding</keyword>
<keyword id="KW-0418">Kinase</keyword>
<keyword id="KW-0441">Lipid A biosynthesis</keyword>
<keyword id="KW-0444">Lipid biosynthesis</keyword>
<keyword id="KW-0443">Lipid metabolism</keyword>
<keyword id="KW-0547">Nucleotide-binding</keyword>
<keyword id="KW-1185">Reference proteome</keyword>
<keyword id="KW-0808">Transferase</keyword>
<reference key="1">
    <citation type="submission" date="2006-01" db="EMBL/GenBank/DDBJ databases">
        <title>Complete sequence of Anaeromyxobacter dehalogenans 2CP-C.</title>
        <authorList>
            <person name="Copeland A."/>
            <person name="Lucas S."/>
            <person name="Lapidus A."/>
            <person name="Barry K."/>
            <person name="Detter J.C."/>
            <person name="Glavina T."/>
            <person name="Hammon N."/>
            <person name="Israni S."/>
            <person name="Pitluck S."/>
            <person name="Brettin T."/>
            <person name="Bruce D."/>
            <person name="Han C."/>
            <person name="Tapia R."/>
            <person name="Gilna P."/>
            <person name="Kiss H."/>
            <person name="Schmutz J."/>
            <person name="Larimer F."/>
            <person name="Land M."/>
            <person name="Kyrpides N."/>
            <person name="Anderson I."/>
            <person name="Sanford R.A."/>
            <person name="Ritalahti K.M."/>
            <person name="Thomas H.S."/>
            <person name="Kirby J.R."/>
            <person name="Zhulin I.B."/>
            <person name="Loeffler F.E."/>
            <person name="Richardson P."/>
        </authorList>
    </citation>
    <scope>NUCLEOTIDE SEQUENCE [LARGE SCALE GENOMIC DNA]</scope>
    <source>
        <strain>2CP-C</strain>
    </source>
</reference>
<name>LPXK_ANADE</name>
<comment type="function">
    <text evidence="1">Transfers the gamma-phosphate of ATP to the 4'-position of a tetraacyldisaccharide 1-phosphate intermediate (termed DS-1-P) to form tetraacyldisaccharide 1,4'-bis-phosphate (lipid IVA).</text>
</comment>
<comment type="catalytic activity">
    <reaction evidence="1">
        <text>a lipid A disaccharide + ATP = a lipid IVA + ADP + H(+)</text>
        <dbReference type="Rhea" id="RHEA:67840"/>
        <dbReference type="ChEBI" id="CHEBI:15378"/>
        <dbReference type="ChEBI" id="CHEBI:30616"/>
        <dbReference type="ChEBI" id="CHEBI:176343"/>
        <dbReference type="ChEBI" id="CHEBI:176425"/>
        <dbReference type="ChEBI" id="CHEBI:456216"/>
        <dbReference type="EC" id="2.7.1.130"/>
    </reaction>
</comment>
<comment type="pathway">
    <text evidence="1">Glycolipid biosynthesis; lipid IV(A) biosynthesis; lipid IV(A) from (3R)-3-hydroxytetradecanoyl-[acyl-carrier-protein] and UDP-N-acetyl-alpha-D-glucosamine: step 6/6.</text>
</comment>
<comment type="similarity">
    <text evidence="1">Belongs to the LpxK family.</text>
</comment>
<feature type="chain" id="PRO_0000291193" description="Tetraacyldisaccharide 4'-kinase">
    <location>
        <begin position="1"/>
        <end position="378"/>
    </location>
</feature>
<feature type="binding site" evidence="1">
    <location>
        <begin position="63"/>
        <end position="70"/>
    </location>
    <ligand>
        <name>ATP</name>
        <dbReference type="ChEBI" id="CHEBI:30616"/>
    </ligand>
</feature>
<accession>Q2IL55</accession>
<evidence type="ECO:0000255" key="1">
    <source>
        <dbReference type="HAMAP-Rule" id="MF_00409"/>
    </source>
</evidence>
<protein>
    <recommendedName>
        <fullName evidence="1">Tetraacyldisaccharide 4'-kinase</fullName>
        <ecNumber evidence="1">2.7.1.130</ecNumber>
    </recommendedName>
    <alternativeName>
        <fullName evidence="1">Lipid A 4'-kinase</fullName>
    </alternativeName>
</protein>
<gene>
    <name evidence="1" type="primary">lpxK</name>
    <name type="ordered locus">Adeh_2613</name>
</gene>
<organism>
    <name type="scientific">Anaeromyxobacter dehalogenans (strain 2CP-C)</name>
    <dbReference type="NCBI Taxonomy" id="290397"/>
    <lineage>
        <taxon>Bacteria</taxon>
        <taxon>Pseudomonadati</taxon>
        <taxon>Myxococcota</taxon>
        <taxon>Myxococcia</taxon>
        <taxon>Myxococcales</taxon>
        <taxon>Cystobacterineae</taxon>
        <taxon>Anaeromyxobacteraceae</taxon>
        <taxon>Anaeromyxobacter</taxon>
    </lineage>
</organism>